<keyword id="KW-0067">ATP-binding</keyword>
<keyword id="KW-0963">Cytoplasm</keyword>
<keyword id="KW-0347">Helicase</keyword>
<keyword id="KW-0378">Hydrolase</keyword>
<keyword id="KW-0507">mRNA processing</keyword>
<keyword id="KW-0508">mRNA splicing</keyword>
<keyword id="KW-0547">Nucleotide-binding</keyword>
<keyword id="KW-0539">Nucleus</keyword>
<keyword id="KW-1185">Reference proteome</keyword>
<name>PRP28_KLULA</name>
<evidence type="ECO:0000250" key="1"/>
<evidence type="ECO:0000255" key="2">
    <source>
        <dbReference type="PROSITE-ProRule" id="PRU00541"/>
    </source>
</evidence>
<evidence type="ECO:0000255" key="3">
    <source>
        <dbReference type="PROSITE-ProRule" id="PRU00542"/>
    </source>
</evidence>
<evidence type="ECO:0000305" key="4"/>
<sequence>MLRPVSIDDLISDTVPAKKPRFLIKKRTFPQPEEEEASKALSHTVIKRKDNYRNLDEDELYEEQVSNEPDDLLFLARKSADLLKKRQNEDESIVDNYLGKHWSEKKYEEMSTRDWRILSEDFNISSKGGTVEKPLRNWHELKLIPEDLLNIITNDLHYNEPTSIQRSTIPNVINNRDFIGVASTGSGKTLAFLLPILIKLHGIPPLNSITKHDGPLALVLAPTRELAQQIQHEGQSITKLWKRPCNIVSIVGGHSLEEISANLRDGCDILVATPGRLLDCLDSHLLFLKQVNTLVLDEADKMIDFGFEDQLTTILAKTETISNRQTMMFTATFSPTIEKVANGYLKKPSYVTVGGEESKPKIKQIVRYVPDEEEKLKILVKDFLPNYKAPIIIFINYKRTADWLFDKLREARFRATTLHGSKSQEQREHSLSLLRNGKVDILIATDVAGRGIDIPNVSLVVNLQFPKSFDSFVHRVGRTGRAGKTGTALTFLTEEEDHSAMAKLFDYVKKNDFTGENYISKEAMSKYNVDKSSYKPIII</sequence>
<dbReference type="EC" id="3.6.4.13"/>
<dbReference type="EMBL" id="CR382123">
    <property type="protein sequence ID" value="CAH01741.1"/>
    <property type="molecule type" value="Genomic_DNA"/>
</dbReference>
<dbReference type="RefSeq" id="XP_452890.1">
    <property type="nucleotide sequence ID" value="XM_452890.1"/>
</dbReference>
<dbReference type="SMR" id="Q6CT49"/>
<dbReference type="FunCoup" id="Q6CT49">
    <property type="interactions" value="987"/>
</dbReference>
<dbReference type="STRING" id="284590.Q6CT49"/>
<dbReference type="PaxDb" id="284590-Q6CT49"/>
<dbReference type="KEGG" id="kla:KLLA0_C15433g"/>
<dbReference type="eggNOG" id="KOG0333">
    <property type="taxonomic scope" value="Eukaryota"/>
</dbReference>
<dbReference type="HOGENOM" id="CLU_003041_1_5_1"/>
<dbReference type="InParanoid" id="Q6CT49"/>
<dbReference type="OMA" id="IFINYKR"/>
<dbReference type="Proteomes" id="UP000000598">
    <property type="component" value="Chromosome C"/>
</dbReference>
<dbReference type="GO" id="GO:0005737">
    <property type="term" value="C:cytoplasm"/>
    <property type="evidence" value="ECO:0007669"/>
    <property type="project" value="UniProtKB-SubCell"/>
</dbReference>
<dbReference type="GO" id="GO:0005634">
    <property type="term" value="C:nucleus"/>
    <property type="evidence" value="ECO:0007669"/>
    <property type="project" value="UniProtKB-SubCell"/>
</dbReference>
<dbReference type="GO" id="GO:0005524">
    <property type="term" value="F:ATP binding"/>
    <property type="evidence" value="ECO:0007669"/>
    <property type="project" value="UniProtKB-KW"/>
</dbReference>
<dbReference type="GO" id="GO:0016887">
    <property type="term" value="F:ATP hydrolysis activity"/>
    <property type="evidence" value="ECO:0007669"/>
    <property type="project" value="RHEA"/>
</dbReference>
<dbReference type="GO" id="GO:0003676">
    <property type="term" value="F:nucleic acid binding"/>
    <property type="evidence" value="ECO:0007669"/>
    <property type="project" value="InterPro"/>
</dbReference>
<dbReference type="GO" id="GO:0003724">
    <property type="term" value="F:RNA helicase activity"/>
    <property type="evidence" value="ECO:0007669"/>
    <property type="project" value="UniProtKB-EC"/>
</dbReference>
<dbReference type="GO" id="GO:0006397">
    <property type="term" value="P:mRNA processing"/>
    <property type="evidence" value="ECO:0007669"/>
    <property type="project" value="UniProtKB-KW"/>
</dbReference>
<dbReference type="GO" id="GO:0008380">
    <property type="term" value="P:RNA splicing"/>
    <property type="evidence" value="ECO:0007669"/>
    <property type="project" value="UniProtKB-KW"/>
</dbReference>
<dbReference type="CDD" id="cd17945">
    <property type="entry name" value="DEADc_DDX23"/>
    <property type="match status" value="1"/>
</dbReference>
<dbReference type="CDD" id="cd18787">
    <property type="entry name" value="SF2_C_DEAD"/>
    <property type="match status" value="1"/>
</dbReference>
<dbReference type="Gene3D" id="3.40.50.300">
    <property type="entry name" value="P-loop containing nucleotide triphosphate hydrolases"/>
    <property type="match status" value="2"/>
</dbReference>
<dbReference type="InterPro" id="IPR011545">
    <property type="entry name" value="DEAD/DEAH_box_helicase_dom"/>
</dbReference>
<dbReference type="InterPro" id="IPR014001">
    <property type="entry name" value="Helicase_ATP-bd"/>
</dbReference>
<dbReference type="InterPro" id="IPR001650">
    <property type="entry name" value="Helicase_C-like"/>
</dbReference>
<dbReference type="InterPro" id="IPR027417">
    <property type="entry name" value="P-loop_NTPase"/>
</dbReference>
<dbReference type="InterPro" id="IPR000629">
    <property type="entry name" value="RNA-helicase_DEAD-box_CS"/>
</dbReference>
<dbReference type="PANTHER" id="PTHR47958">
    <property type="entry name" value="ATP-DEPENDENT RNA HELICASE DBP3"/>
    <property type="match status" value="1"/>
</dbReference>
<dbReference type="Pfam" id="PF00270">
    <property type="entry name" value="DEAD"/>
    <property type="match status" value="1"/>
</dbReference>
<dbReference type="Pfam" id="PF00271">
    <property type="entry name" value="Helicase_C"/>
    <property type="match status" value="1"/>
</dbReference>
<dbReference type="SMART" id="SM00487">
    <property type="entry name" value="DEXDc"/>
    <property type="match status" value="1"/>
</dbReference>
<dbReference type="SMART" id="SM00490">
    <property type="entry name" value="HELICc"/>
    <property type="match status" value="1"/>
</dbReference>
<dbReference type="SUPFAM" id="SSF52540">
    <property type="entry name" value="P-loop containing nucleoside triphosphate hydrolases"/>
    <property type="match status" value="1"/>
</dbReference>
<dbReference type="PROSITE" id="PS00039">
    <property type="entry name" value="DEAD_ATP_HELICASE"/>
    <property type="match status" value="1"/>
</dbReference>
<dbReference type="PROSITE" id="PS51192">
    <property type="entry name" value="HELICASE_ATP_BIND_1"/>
    <property type="match status" value="1"/>
</dbReference>
<dbReference type="PROSITE" id="PS51194">
    <property type="entry name" value="HELICASE_CTER"/>
    <property type="match status" value="1"/>
</dbReference>
<dbReference type="PROSITE" id="PS51195">
    <property type="entry name" value="Q_MOTIF"/>
    <property type="match status" value="1"/>
</dbReference>
<feature type="chain" id="PRO_0000227964" description="Pre-mRNA-splicing ATP-dependent RNA helicase PRP28">
    <location>
        <begin position="1"/>
        <end position="539"/>
    </location>
</feature>
<feature type="domain" description="Helicase ATP-binding" evidence="2">
    <location>
        <begin position="169"/>
        <end position="351"/>
    </location>
</feature>
<feature type="domain" description="Helicase C-terminal" evidence="3">
    <location>
        <begin position="361"/>
        <end position="525"/>
    </location>
</feature>
<feature type="short sequence motif" description="Q motif">
    <location>
        <begin position="136"/>
        <end position="166"/>
    </location>
</feature>
<feature type="short sequence motif" description="DEAD box">
    <location>
        <begin position="297"/>
        <end position="300"/>
    </location>
</feature>
<feature type="binding site" evidence="2">
    <location>
        <begin position="182"/>
        <end position="189"/>
    </location>
    <ligand>
        <name>ATP</name>
        <dbReference type="ChEBI" id="CHEBI:30616"/>
    </ligand>
</feature>
<accession>Q6CT49</accession>
<reference key="1">
    <citation type="journal article" date="2004" name="Nature">
        <title>Genome evolution in yeasts.</title>
        <authorList>
            <person name="Dujon B."/>
            <person name="Sherman D."/>
            <person name="Fischer G."/>
            <person name="Durrens P."/>
            <person name="Casaregola S."/>
            <person name="Lafontaine I."/>
            <person name="de Montigny J."/>
            <person name="Marck C."/>
            <person name="Neuveglise C."/>
            <person name="Talla E."/>
            <person name="Goffard N."/>
            <person name="Frangeul L."/>
            <person name="Aigle M."/>
            <person name="Anthouard V."/>
            <person name="Babour A."/>
            <person name="Barbe V."/>
            <person name="Barnay S."/>
            <person name="Blanchin S."/>
            <person name="Beckerich J.-M."/>
            <person name="Beyne E."/>
            <person name="Bleykasten C."/>
            <person name="Boisrame A."/>
            <person name="Boyer J."/>
            <person name="Cattolico L."/>
            <person name="Confanioleri F."/>
            <person name="de Daruvar A."/>
            <person name="Despons L."/>
            <person name="Fabre E."/>
            <person name="Fairhead C."/>
            <person name="Ferry-Dumazet H."/>
            <person name="Groppi A."/>
            <person name="Hantraye F."/>
            <person name="Hennequin C."/>
            <person name="Jauniaux N."/>
            <person name="Joyet P."/>
            <person name="Kachouri R."/>
            <person name="Kerrest A."/>
            <person name="Koszul R."/>
            <person name="Lemaire M."/>
            <person name="Lesur I."/>
            <person name="Ma L."/>
            <person name="Muller H."/>
            <person name="Nicaud J.-M."/>
            <person name="Nikolski M."/>
            <person name="Oztas S."/>
            <person name="Ozier-Kalogeropoulos O."/>
            <person name="Pellenz S."/>
            <person name="Potier S."/>
            <person name="Richard G.-F."/>
            <person name="Straub M.-L."/>
            <person name="Suleau A."/>
            <person name="Swennen D."/>
            <person name="Tekaia F."/>
            <person name="Wesolowski-Louvel M."/>
            <person name="Westhof E."/>
            <person name="Wirth B."/>
            <person name="Zeniou-Meyer M."/>
            <person name="Zivanovic Y."/>
            <person name="Bolotin-Fukuhara M."/>
            <person name="Thierry A."/>
            <person name="Bouchier C."/>
            <person name="Caudron B."/>
            <person name="Scarpelli C."/>
            <person name="Gaillardin C."/>
            <person name="Weissenbach J."/>
            <person name="Wincker P."/>
            <person name="Souciet J.-L."/>
        </authorList>
    </citation>
    <scope>NUCLEOTIDE SEQUENCE [LARGE SCALE GENOMIC DNA]</scope>
    <source>
        <strain>ATCC 8585 / CBS 2359 / DSM 70799 / NBRC 1267 / NRRL Y-1140 / WM37</strain>
    </source>
</reference>
<organism>
    <name type="scientific">Kluyveromyces lactis (strain ATCC 8585 / CBS 2359 / DSM 70799 / NBRC 1267 / NRRL Y-1140 / WM37)</name>
    <name type="common">Yeast</name>
    <name type="synonym">Candida sphaerica</name>
    <dbReference type="NCBI Taxonomy" id="284590"/>
    <lineage>
        <taxon>Eukaryota</taxon>
        <taxon>Fungi</taxon>
        <taxon>Dikarya</taxon>
        <taxon>Ascomycota</taxon>
        <taxon>Saccharomycotina</taxon>
        <taxon>Saccharomycetes</taxon>
        <taxon>Saccharomycetales</taxon>
        <taxon>Saccharomycetaceae</taxon>
        <taxon>Kluyveromyces</taxon>
    </lineage>
</organism>
<proteinExistence type="inferred from homology"/>
<protein>
    <recommendedName>
        <fullName>Pre-mRNA-splicing ATP-dependent RNA helicase PRP28</fullName>
        <ecNumber>3.6.4.13</ecNumber>
    </recommendedName>
</protein>
<gene>
    <name type="primary">PRP28</name>
    <name type="ordered locus">KLLA0C15433g</name>
</gene>
<comment type="function">
    <text evidence="1">ATP-dependent RNA helicase involved in mRNA splicing. May destabilize the U1/5'-splice site duplex to permit an effective competition for the 5'-splice site by the U6 snRNA, resulting in the switch between U1 and U6 at the 5'-splice site. May also act to unwind the U4/U6 base-pairing interaction in the U4/U6/U5 snRNP, facilitating the first covalent step of splicing (By similarity).</text>
</comment>
<comment type="catalytic activity">
    <reaction>
        <text>ATP + H2O = ADP + phosphate + H(+)</text>
        <dbReference type="Rhea" id="RHEA:13065"/>
        <dbReference type="ChEBI" id="CHEBI:15377"/>
        <dbReference type="ChEBI" id="CHEBI:15378"/>
        <dbReference type="ChEBI" id="CHEBI:30616"/>
        <dbReference type="ChEBI" id="CHEBI:43474"/>
        <dbReference type="ChEBI" id="CHEBI:456216"/>
        <dbReference type="EC" id="3.6.4.13"/>
    </reaction>
</comment>
<comment type="subunit">
    <text evidence="1">Component of the U5 snRNP complex.</text>
</comment>
<comment type="subcellular location">
    <subcellularLocation>
        <location evidence="1">Cytoplasm</location>
    </subcellularLocation>
    <subcellularLocation>
        <location evidence="1">Nucleus</location>
    </subcellularLocation>
</comment>
<comment type="domain">
    <text>The Q motif is unique to and characteristic of the DEAD box family of RNA helicases and controls ATP binding and hydrolysis.</text>
</comment>
<comment type="similarity">
    <text evidence="4">Belongs to the DEAD box helicase family. DDX23/PRP28 subfamily.</text>
</comment>